<keyword id="KW-0004">4Fe-4S</keyword>
<keyword id="KW-0408">Iron</keyword>
<keyword id="KW-0411">Iron-sulfur</keyword>
<keyword id="KW-0456">Lyase</keyword>
<keyword id="KW-0479">Metal-binding</keyword>
<keyword id="KW-0949">S-adenosyl-L-methionine</keyword>
<keyword id="KW-0784">Thiamine biosynthesis</keyword>
<keyword id="KW-0862">Zinc</keyword>
<comment type="function">
    <text evidence="1">Catalyzes the synthesis of the hydroxymethylpyrimidine phosphate (HMP-P) moiety of thiamine from aminoimidazole ribotide (AIR) in a radical S-adenosyl-L-methionine (SAM)-dependent reaction.</text>
</comment>
<comment type="catalytic activity">
    <reaction evidence="1">
        <text>5-amino-1-(5-phospho-beta-D-ribosyl)imidazole + S-adenosyl-L-methionine = 4-amino-2-methyl-5-(phosphooxymethyl)pyrimidine + CO + 5'-deoxyadenosine + formate + L-methionine + 3 H(+)</text>
        <dbReference type="Rhea" id="RHEA:24840"/>
        <dbReference type="ChEBI" id="CHEBI:15378"/>
        <dbReference type="ChEBI" id="CHEBI:15740"/>
        <dbReference type="ChEBI" id="CHEBI:17245"/>
        <dbReference type="ChEBI" id="CHEBI:17319"/>
        <dbReference type="ChEBI" id="CHEBI:57844"/>
        <dbReference type="ChEBI" id="CHEBI:58354"/>
        <dbReference type="ChEBI" id="CHEBI:59789"/>
        <dbReference type="ChEBI" id="CHEBI:137981"/>
        <dbReference type="EC" id="4.1.99.17"/>
    </reaction>
</comment>
<comment type="cofactor">
    <cofactor evidence="1">
        <name>[4Fe-4S] cluster</name>
        <dbReference type="ChEBI" id="CHEBI:49883"/>
    </cofactor>
    <text evidence="1">Binds 1 [4Fe-4S] cluster per subunit. The cluster is coordinated with 3 cysteines and an exchangeable S-adenosyl-L-methionine.</text>
</comment>
<comment type="pathway">
    <text evidence="1">Cofactor biosynthesis; thiamine diphosphate biosynthesis.</text>
</comment>
<comment type="subunit">
    <text evidence="1">Homodimer.</text>
</comment>
<comment type="similarity">
    <text evidence="1">Belongs to the ThiC family.</text>
</comment>
<sequence>MSIKAKNAAHLRESAQVDSGSVQPFTRSQKIYVQGSRPDIRVPMREITLDVTPTDFGGEINAPVTVYDTSGPYTDPNVIIDVRKGLADVRSPWIDSRNDTERLPGLSSNFGQQRLSDAELTALRFAHVRNPRRAKAGANVSQMHYARQGIITAEMEYVAIRENMKLQEARAAGLLTQQHAGHSFGASIPKEITAEFVREEIARGRAIIPANINHVELEPMIIGRNFLVKINGNIGNSALGSSIEEEVAKLTWGIRWGSDTVMDLSTGKHIHETREWIIRNSPVPIGTVPIYQALEKVGGAAEDLTWELFRDTLIEQAEQGVDYFTIHAGVLLRYVPLTAKRVTGIVSRGGSIMAKWCLAHHKENFLYTHFEDICEIMKAYDVSFSLGDGLRPGSIADANDAAQFGELETLGELTKIAWKHDVQTMIEGPGHVPMQLIKENMDKQLECCDEAPFYTLGPLTTDIAPGYDHITSGIGAAMIGWFGCAMLCYVTPKEHLGLPNKDDVKTGIITYKIAAHAADLAKGHPGAQIRDNALSKARFEFRWEDQFNLGLDPDTARSYHDETLPKDSAKVAHFCSMCGPKFCSMKITQEVREYAANQRIEAVDVDVAKGLAEQAERFKQEGSQLYKKV</sequence>
<name>THIC_PSEU2</name>
<accession>Q4ZZ08</accession>
<gene>
    <name evidence="1" type="primary">thiC</name>
    <name type="ordered locus">Psyr_0544</name>
</gene>
<proteinExistence type="inferred from homology"/>
<reference key="1">
    <citation type="journal article" date="2005" name="Proc. Natl. Acad. Sci. U.S.A.">
        <title>Comparison of the complete genome sequences of Pseudomonas syringae pv. syringae B728a and pv. tomato DC3000.</title>
        <authorList>
            <person name="Feil H."/>
            <person name="Feil W.S."/>
            <person name="Chain P."/>
            <person name="Larimer F."/>
            <person name="Dibartolo G."/>
            <person name="Copeland A."/>
            <person name="Lykidis A."/>
            <person name="Trong S."/>
            <person name="Nolan M."/>
            <person name="Goltsman E."/>
            <person name="Thiel J."/>
            <person name="Malfatti S."/>
            <person name="Loper J.E."/>
            <person name="Lapidus A."/>
            <person name="Detter J.C."/>
            <person name="Land M."/>
            <person name="Richardson P.M."/>
            <person name="Kyrpides N.C."/>
            <person name="Ivanova N."/>
            <person name="Lindow S.E."/>
        </authorList>
    </citation>
    <scope>NUCLEOTIDE SEQUENCE [LARGE SCALE GENOMIC DNA]</scope>
    <source>
        <strain>B728a</strain>
    </source>
</reference>
<feature type="chain" id="PRO_0000242290" description="Phosphomethylpyrimidine synthase">
    <location>
        <begin position="1"/>
        <end position="629"/>
    </location>
</feature>
<feature type="region of interest" description="Disordered" evidence="2">
    <location>
        <begin position="1"/>
        <end position="21"/>
    </location>
</feature>
<feature type="binding site" evidence="1">
    <location>
        <position position="233"/>
    </location>
    <ligand>
        <name>substrate</name>
    </ligand>
</feature>
<feature type="binding site" evidence="1">
    <location>
        <position position="262"/>
    </location>
    <ligand>
        <name>substrate</name>
    </ligand>
</feature>
<feature type="binding site" evidence="1">
    <location>
        <position position="291"/>
    </location>
    <ligand>
        <name>substrate</name>
    </ligand>
</feature>
<feature type="binding site" evidence="1">
    <location>
        <position position="327"/>
    </location>
    <ligand>
        <name>substrate</name>
    </ligand>
</feature>
<feature type="binding site" evidence="1">
    <location>
        <begin position="347"/>
        <end position="349"/>
    </location>
    <ligand>
        <name>substrate</name>
    </ligand>
</feature>
<feature type="binding site" evidence="1">
    <location>
        <begin position="388"/>
        <end position="391"/>
    </location>
    <ligand>
        <name>substrate</name>
    </ligand>
</feature>
<feature type="binding site" evidence="1">
    <location>
        <position position="427"/>
    </location>
    <ligand>
        <name>substrate</name>
    </ligand>
</feature>
<feature type="binding site" evidence="1">
    <location>
        <position position="431"/>
    </location>
    <ligand>
        <name>Zn(2+)</name>
        <dbReference type="ChEBI" id="CHEBI:29105"/>
    </ligand>
</feature>
<feature type="binding site" evidence="1">
    <location>
        <position position="454"/>
    </location>
    <ligand>
        <name>substrate</name>
    </ligand>
</feature>
<feature type="binding site" evidence="1">
    <location>
        <position position="495"/>
    </location>
    <ligand>
        <name>Zn(2+)</name>
        <dbReference type="ChEBI" id="CHEBI:29105"/>
    </ligand>
</feature>
<feature type="binding site" evidence="1">
    <location>
        <position position="575"/>
    </location>
    <ligand>
        <name>[4Fe-4S] cluster</name>
        <dbReference type="ChEBI" id="CHEBI:49883"/>
        <note>4Fe-4S-S-AdoMet</note>
    </ligand>
</feature>
<feature type="binding site" evidence="1">
    <location>
        <position position="578"/>
    </location>
    <ligand>
        <name>[4Fe-4S] cluster</name>
        <dbReference type="ChEBI" id="CHEBI:49883"/>
        <note>4Fe-4S-S-AdoMet</note>
    </ligand>
</feature>
<feature type="binding site" evidence="1">
    <location>
        <position position="583"/>
    </location>
    <ligand>
        <name>[4Fe-4S] cluster</name>
        <dbReference type="ChEBI" id="CHEBI:49883"/>
        <note>4Fe-4S-S-AdoMet</note>
    </ligand>
</feature>
<evidence type="ECO:0000255" key="1">
    <source>
        <dbReference type="HAMAP-Rule" id="MF_00089"/>
    </source>
</evidence>
<evidence type="ECO:0000256" key="2">
    <source>
        <dbReference type="SAM" id="MobiDB-lite"/>
    </source>
</evidence>
<protein>
    <recommendedName>
        <fullName evidence="1">Phosphomethylpyrimidine synthase</fullName>
        <ecNumber evidence="1">4.1.99.17</ecNumber>
    </recommendedName>
    <alternativeName>
        <fullName evidence="1">Hydroxymethylpyrimidine phosphate synthase</fullName>
        <shortName evidence="1">HMP-P synthase</shortName>
        <shortName evidence="1">HMP-phosphate synthase</shortName>
        <shortName evidence="1">HMPP synthase</shortName>
    </alternativeName>
    <alternativeName>
        <fullName evidence="1">Thiamine biosynthesis protein ThiC</fullName>
    </alternativeName>
</protein>
<dbReference type="EC" id="4.1.99.17" evidence="1"/>
<dbReference type="EMBL" id="CP000075">
    <property type="protein sequence ID" value="AAY35614.1"/>
    <property type="molecule type" value="Genomic_DNA"/>
</dbReference>
<dbReference type="RefSeq" id="WP_011266479.1">
    <property type="nucleotide sequence ID" value="NC_007005.1"/>
</dbReference>
<dbReference type="RefSeq" id="YP_233652.1">
    <property type="nucleotide sequence ID" value="NC_007005.1"/>
</dbReference>
<dbReference type="SMR" id="Q4ZZ08"/>
<dbReference type="STRING" id="205918.Psyr_0544"/>
<dbReference type="KEGG" id="psb:Psyr_0544"/>
<dbReference type="PATRIC" id="fig|205918.7.peg.566"/>
<dbReference type="eggNOG" id="COG0422">
    <property type="taxonomic scope" value="Bacteria"/>
</dbReference>
<dbReference type="HOGENOM" id="CLU_013181_2_1_6"/>
<dbReference type="OrthoDB" id="9805897at2"/>
<dbReference type="UniPathway" id="UPA00060"/>
<dbReference type="Proteomes" id="UP000000426">
    <property type="component" value="Chromosome"/>
</dbReference>
<dbReference type="GO" id="GO:0005829">
    <property type="term" value="C:cytosol"/>
    <property type="evidence" value="ECO:0007669"/>
    <property type="project" value="TreeGrafter"/>
</dbReference>
<dbReference type="GO" id="GO:0051539">
    <property type="term" value="F:4 iron, 4 sulfur cluster binding"/>
    <property type="evidence" value="ECO:0007669"/>
    <property type="project" value="UniProtKB-KW"/>
</dbReference>
<dbReference type="GO" id="GO:0016830">
    <property type="term" value="F:carbon-carbon lyase activity"/>
    <property type="evidence" value="ECO:0007669"/>
    <property type="project" value="InterPro"/>
</dbReference>
<dbReference type="GO" id="GO:0008270">
    <property type="term" value="F:zinc ion binding"/>
    <property type="evidence" value="ECO:0007669"/>
    <property type="project" value="UniProtKB-UniRule"/>
</dbReference>
<dbReference type="GO" id="GO:0009228">
    <property type="term" value="P:thiamine biosynthetic process"/>
    <property type="evidence" value="ECO:0007669"/>
    <property type="project" value="UniProtKB-KW"/>
</dbReference>
<dbReference type="GO" id="GO:0009229">
    <property type="term" value="P:thiamine diphosphate biosynthetic process"/>
    <property type="evidence" value="ECO:0007669"/>
    <property type="project" value="UniProtKB-UniRule"/>
</dbReference>
<dbReference type="FunFam" id="3.20.20.540:FF:000001">
    <property type="entry name" value="Phosphomethylpyrimidine synthase"/>
    <property type="match status" value="1"/>
</dbReference>
<dbReference type="Gene3D" id="6.10.250.620">
    <property type="match status" value="1"/>
</dbReference>
<dbReference type="Gene3D" id="3.20.20.540">
    <property type="entry name" value="Radical SAM ThiC family, central domain"/>
    <property type="match status" value="1"/>
</dbReference>
<dbReference type="HAMAP" id="MF_00089">
    <property type="entry name" value="ThiC"/>
    <property type="match status" value="1"/>
</dbReference>
<dbReference type="InterPro" id="IPR037509">
    <property type="entry name" value="ThiC"/>
</dbReference>
<dbReference type="InterPro" id="IPR025747">
    <property type="entry name" value="ThiC-associated_dom"/>
</dbReference>
<dbReference type="InterPro" id="IPR038521">
    <property type="entry name" value="ThiC/Bza_core_dom"/>
</dbReference>
<dbReference type="InterPro" id="IPR002817">
    <property type="entry name" value="ThiC/BzaA/B"/>
</dbReference>
<dbReference type="NCBIfam" id="NF006763">
    <property type="entry name" value="PRK09284.1"/>
    <property type="match status" value="1"/>
</dbReference>
<dbReference type="NCBIfam" id="NF009895">
    <property type="entry name" value="PRK13352.1"/>
    <property type="match status" value="1"/>
</dbReference>
<dbReference type="NCBIfam" id="TIGR00190">
    <property type="entry name" value="thiC"/>
    <property type="match status" value="1"/>
</dbReference>
<dbReference type="PANTHER" id="PTHR30557:SF1">
    <property type="entry name" value="PHOSPHOMETHYLPYRIMIDINE SYNTHASE, CHLOROPLASTIC"/>
    <property type="match status" value="1"/>
</dbReference>
<dbReference type="PANTHER" id="PTHR30557">
    <property type="entry name" value="THIAMINE BIOSYNTHESIS PROTEIN THIC"/>
    <property type="match status" value="1"/>
</dbReference>
<dbReference type="Pfam" id="PF13667">
    <property type="entry name" value="ThiC-associated"/>
    <property type="match status" value="1"/>
</dbReference>
<dbReference type="Pfam" id="PF01964">
    <property type="entry name" value="ThiC_Rad_SAM"/>
    <property type="match status" value="1"/>
</dbReference>
<dbReference type="SFLD" id="SFLDF00407">
    <property type="entry name" value="phosphomethylpyrimidine_syntha"/>
    <property type="match status" value="1"/>
</dbReference>
<dbReference type="SFLD" id="SFLDG01114">
    <property type="entry name" value="phosphomethylpyrimidine_syntha"/>
    <property type="match status" value="1"/>
</dbReference>
<dbReference type="SFLD" id="SFLDS00113">
    <property type="entry name" value="Radical_SAM_Phosphomethylpyrim"/>
    <property type="match status" value="1"/>
</dbReference>
<organism>
    <name type="scientific">Pseudomonas syringae pv. syringae (strain B728a)</name>
    <dbReference type="NCBI Taxonomy" id="205918"/>
    <lineage>
        <taxon>Bacteria</taxon>
        <taxon>Pseudomonadati</taxon>
        <taxon>Pseudomonadota</taxon>
        <taxon>Gammaproteobacteria</taxon>
        <taxon>Pseudomonadales</taxon>
        <taxon>Pseudomonadaceae</taxon>
        <taxon>Pseudomonas</taxon>
        <taxon>Pseudomonas syringae</taxon>
    </lineage>
</organism>